<name>ASCA3_ASCTR</name>
<accession>P0CJ27</accession>
<keyword id="KW-0878">Amphibian defense peptide</keyword>
<keyword id="KW-0044">Antibiotic</keyword>
<keyword id="KW-0929">Antimicrobial</keyword>
<keyword id="KW-0903">Direct protein sequencing</keyword>
<keyword id="KW-0964">Secreted</keyword>
<feature type="peptide" id="PRO_0000406130" description="Ascaphin-3">
    <location>
        <begin position="1"/>
        <end position="24"/>
    </location>
</feature>
<comment type="function">
    <text evidence="1">Antimicrobial peptide that shows higher potency against Gram-negative bacteria than against Gram-positive bacteria. Has a very week hemolytic activity.</text>
</comment>
<comment type="subcellular location">
    <subcellularLocation>
        <location>Secreted</location>
    </subcellularLocation>
</comment>
<comment type="tissue specificity">
    <text>Expressed by the skin glands.</text>
</comment>
<comment type="mass spectrometry"/>
<comment type="similarity">
    <text evidence="2">Belongs to the ascaphin family.</text>
</comment>
<organism>
    <name type="scientific">Ascaphus truei</name>
    <name type="common">Coastal tailed frog</name>
    <dbReference type="NCBI Taxonomy" id="8439"/>
    <lineage>
        <taxon>Eukaryota</taxon>
        <taxon>Metazoa</taxon>
        <taxon>Chordata</taxon>
        <taxon>Craniata</taxon>
        <taxon>Vertebrata</taxon>
        <taxon>Euteleostomi</taxon>
        <taxon>Amphibia</taxon>
        <taxon>Batrachia</taxon>
        <taxon>Anura</taxon>
        <taxon>Ascaphidae</taxon>
        <taxon>Ascaphus</taxon>
    </lineage>
</organism>
<evidence type="ECO:0000269" key="1">
    <source>
    </source>
</evidence>
<evidence type="ECO:0000305" key="2"/>
<sequence>GFRDVLKGAAKAFVKTVAGHIANI</sequence>
<protein>
    <recommendedName>
        <fullName>Ascaphin-3</fullName>
    </recommendedName>
</protein>
<proteinExistence type="evidence at protein level"/>
<dbReference type="GO" id="GO:0005576">
    <property type="term" value="C:extracellular region"/>
    <property type="evidence" value="ECO:0000314"/>
    <property type="project" value="UniProtKB"/>
</dbReference>
<dbReference type="GO" id="GO:0050829">
    <property type="term" value="P:defense response to Gram-negative bacterium"/>
    <property type="evidence" value="ECO:0000314"/>
    <property type="project" value="UniProtKB"/>
</dbReference>
<reference key="1">
    <citation type="journal article" date="2004" name="Biochem. Biophys. Res. Commun.">
        <title>The ascaphins: a family of antimicrobial peptides from the skin secretions of the most primitive extant frog, Ascaphus truei.</title>
        <authorList>
            <person name="Conlon J.M."/>
            <person name="Sonnevend A."/>
            <person name="Davidson C."/>
            <person name="Smith D.D."/>
            <person name="Nielsen P.F."/>
        </authorList>
    </citation>
    <scope>PROTEIN SEQUENCE</scope>
    <scope>FUNCTION</scope>
    <scope>MASS SPECTROMETRY</scope>
    <source>
        <tissue>Skin secretion</tissue>
    </source>
</reference>